<proteinExistence type="evidence at protein level"/>
<name>SPI1_MOUSE</name>
<keyword id="KW-0002">3D-structure</keyword>
<keyword id="KW-0010">Activator</keyword>
<keyword id="KW-0217">Developmental protein</keyword>
<keyword id="KW-0238">DNA-binding</keyword>
<keyword id="KW-0539">Nucleus</keyword>
<keyword id="KW-0597">Phosphoprotein</keyword>
<keyword id="KW-0656">Proto-oncogene</keyword>
<keyword id="KW-1185">Reference proteome</keyword>
<keyword id="KW-0694">RNA-binding</keyword>
<keyword id="KW-0804">Transcription</keyword>
<keyword id="KW-0805">Transcription regulation</keyword>
<organism>
    <name type="scientific">Mus musculus</name>
    <name type="common">Mouse</name>
    <dbReference type="NCBI Taxonomy" id="10090"/>
    <lineage>
        <taxon>Eukaryota</taxon>
        <taxon>Metazoa</taxon>
        <taxon>Chordata</taxon>
        <taxon>Craniata</taxon>
        <taxon>Vertebrata</taxon>
        <taxon>Euteleostomi</taxon>
        <taxon>Mammalia</taxon>
        <taxon>Eutheria</taxon>
        <taxon>Euarchontoglires</taxon>
        <taxon>Glires</taxon>
        <taxon>Rodentia</taxon>
        <taxon>Myomorpha</taxon>
        <taxon>Muroidea</taxon>
        <taxon>Muridae</taxon>
        <taxon>Murinae</taxon>
        <taxon>Mus</taxon>
        <taxon>Mus</taxon>
    </lineage>
</organism>
<gene>
    <name type="primary">Spi1</name>
    <name evidence="13" type="synonym">Sfpi-1</name>
    <name type="synonym">Sfpi1</name>
</gene>
<accession>P17433</accession>
<accession>Q99L57</accession>
<dbReference type="EMBL" id="X17463">
    <property type="protein sequence ID" value="CAA35502.1"/>
    <property type="status" value="ALT_INIT"/>
    <property type="molecule type" value="mRNA"/>
</dbReference>
<dbReference type="EMBL" id="L03215">
    <property type="protein sequence ID" value="AAB59699.1"/>
    <property type="status" value="ALT_INIT"/>
    <property type="molecule type" value="mRNA"/>
</dbReference>
<dbReference type="EMBL" id="M32370">
    <property type="protein sequence ID" value="AAA40024.1"/>
    <property type="molecule type" value="mRNA"/>
</dbReference>
<dbReference type="EMBL" id="M38252">
    <property type="protein sequence ID" value="AAA40110.1"/>
    <property type="molecule type" value="mRNA"/>
</dbReference>
<dbReference type="EMBL" id="BC003815">
    <property type="protein sequence ID" value="AAH03815.1"/>
    <property type="molecule type" value="mRNA"/>
</dbReference>
<dbReference type="CCDS" id="CCDS16425.1"/>
<dbReference type="PIR" id="A34693">
    <property type="entry name" value="A34693"/>
</dbReference>
<dbReference type="RefSeq" id="NP_035485.1">
    <property type="nucleotide sequence ID" value="NM_011355.2"/>
</dbReference>
<dbReference type="PDB" id="1PUE">
    <property type="method" value="X-ray"/>
    <property type="resolution" value="2.10 A"/>
    <property type="chains" value="E/F=171-259"/>
</dbReference>
<dbReference type="PDB" id="5W3G">
    <property type="method" value="NMR"/>
    <property type="chains" value="A=167-272"/>
</dbReference>
<dbReference type="PDB" id="8EVH">
    <property type="method" value="EM"/>
    <property type="resolution" value="2.85 A"/>
    <property type="chains" value="O=1-272"/>
</dbReference>
<dbReference type="PDB" id="8EVI">
    <property type="method" value="EM"/>
    <property type="resolution" value="2.64 A"/>
    <property type="chains" value="O=1-272"/>
</dbReference>
<dbReference type="PDB" id="8EVJ">
    <property type="method" value="EM"/>
    <property type="resolution" value="4.10 A"/>
    <property type="chains" value="O=1-272"/>
</dbReference>
<dbReference type="PDB" id="8SMH">
    <property type="method" value="X-ray"/>
    <property type="resolution" value="1.37 A"/>
    <property type="chains" value="F=167-272"/>
</dbReference>
<dbReference type="PDB" id="8SMJ">
    <property type="method" value="X-ray"/>
    <property type="resolution" value="1.39 A"/>
    <property type="chains" value="F=167-272"/>
</dbReference>
<dbReference type="PDB" id="8SP1">
    <property type="method" value="X-ray"/>
    <property type="resolution" value="1.62 A"/>
    <property type="chains" value="F=167-265"/>
</dbReference>
<dbReference type="PDBsum" id="1PUE"/>
<dbReference type="PDBsum" id="5W3G"/>
<dbReference type="PDBsum" id="8EVH"/>
<dbReference type="PDBsum" id="8EVI"/>
<dbReference type="PDBsum" id="8EVJ"/>
<dbReference type="PDBsum" id="8SMH"/>
<dbReference type="PDBsum" id="8SMJ"/>
<dbReference type="PDBsum" id="8SP1"/>
<dbReference type="EMDB" id="EMD-28629"/>
<dbReference type="EMDB" id="EMD-28630"/>
<dbReference type="EMDB" id="EMD-28631"/>
<dbReference type="SMR" id="P17433"/>
<dbReference type="BioGRID" id="203184">
    <property type="interactions" value="16"/>
</dbReference>
<dbReference type="CORUM" id="P17433"/>
<dbReference type="FunCoup" id="P17433">
    <property type="interactions" value="689"/>
</dbReference>
<dbReference type="IntAct" id="P17433">
    <property type="interactions" value="8"/>
</dbReference>
<dbReference type="STRING" id="10090.ENSMUSP00000002180"/>
<dbReference type="iPTMnet" id="P17433"/>
<dbReference type="PhosphoSitePlus" id="P17433"/>
<dbReference type="PaxDb" id="10090-ENSMUSP00000002180"/>
<dbReference type="PeptideAtlas" id="P17433"/>
<dbReference type="ProteomicsDB" id="257319"/>
<dbReference type="Antibodypedia" id="26734">
    <property type="antibodies" value="570 antibodies from 43 providers"/>
</dbReference>
<dbReference type="DNASU" id="20375"/>
<dbReference type="Ensembl" id="ENSMUST00000002180.8">
    <property type="protein sequence ID" value="ENSMUSP00000002180.8"/>
    <property type="gene ID" value="ENSMUSG00000002111.10"/>
</dbReference>
<dbReference type="GeneID" id="20375"/>
<dbReference type="KEGG" id="mmu:20375"/>
<dbReference type="UCSC" id="uc008kuj.1">
    <property type="organism name" value="mouse"/>
</dbReference>
<dbReference type="AGR" id="MGI:98282"/>
<dbReference type="CTD" id="6688"/>
<dbReference type="MGI" id="MGI:98282">
    <property type="gene designation" value="Spi1"/>
</dbReference>
<dbReference type="VEuPathDB" id="HostDB:ENSMUSG00000002111"/>
<dbReference type="eggNOG" id="KOG3805">
    <property type="taxonomic scope" value="Eukaryota"/>
</dbReference>
<dbReference type="GeneTree" id="ENSGT00940000159754"/>
<dbReference type="HOGENOM" id="CLU_066451_0_0_1"/>
<dbReference type="InParanoid" id="P17433"/>
<dbReference type="OMA" id="SYLPRMY"/>
<dbReference type="OrthoDB" id="10043646at2759"/>
<dbReference type="PhylomeDB" id="P17433"/>
<dbReference type="TreeFam" id="TF352494"/>
<dbReference type="BioGRID-ORCS" id="20375">
    <property type="hits" value="10 hits in 81 CRISPR screens"/>
</dbReference>
<dbReference type="ChiTaRS" id="Spi1">
    <property type="organism name" value="mouse"/>
</dbReference>
<dbReference type="EvolutionaryTrace" id="P17433"/>
<dbReference type="PRO" id="PR:P17433"/>
<dbReference type="Proteomes" id="UP000000589">
    <property type="component" value="Chromosome 2"/>
</dbReference>
<dbReference type="RNAct" id="P17433">
    <property type="molecule type" value="protein"/>
</dbReference>
<dbReference type="Bgee" id="ENSMUSG00000002111">
    <property type="expression patterns" value="Expressed in granulocyte and 151 other cell types or tissues"/>
</dbReference>
<dbReference type="ExpressionAtlas" id="P17433">
    <property type="expression patterns" value="baseline and differential"/>
</dbReference>
<dbReference type="GO" id="GO:0000785">
    <property type="term" value="C:chromatin"/>
    <property type="evidence" value="ECO:0000314"/>
    <property type="project" value="BHF-UCL"/>
</dbReference>
<dbReference type="GO" id="GO:0005654">
    <property type="term" value="C:nucleoplasm"/>
    <property type="evidence" value="ECO:0000304"/>
    <property type="project" value="Reactome"/>
</dbReference>
<dbReference type="GO" id="GO:0005634">
    <property type="term" value="C:nucleus"/>
    <property type="evidence" value="ECO:0000314"/>
    <property type="project" value="BHF-UCL"/>
</dbReference>
<dbReference type="GO" id="GO:0005667">
    <property type="term" value="C:transcription regulator complex"/>
    <property type="evidence" value="ECO:0000305"/>
    <property type="project" value="MGI"/>
</dbReference>
<dbReference type="GO" id="GO:0003682">
    <property type="term" value="F:chromatin binding"/>
    <property type="evidence" value="ECO:0000315"/>
    <property type="project" value="ARUK-UCL"/>
</dbReference>
<dbReference type="GO" id="GO:0000987">
    <property type="term" value="F:cis-regulatory region sequence-specific DNA binding"/>
    <property type="evidence" value="ECO:0000314"/>
    <property type="project" value="ARUK-UCL"/>
</dbReference>
<dbReference type="GO" id="GO:0003677">
    <property type="term" value="F:DNA binding"/>
    <property type="evidence" value="ECO:0000314"/>
    <property type="project" value="BHF-UCL"/>
</dbReference>
<dbReference type="GO" id="GO:0001228">
    <property type="term" value="F:DNA-binding transcription activator activity, RNA polymerase II-specific"/>
    <property type="evidence" value="ECO:0000314"/>
    <property type="project" value="BHF-UCL"/>
</dbReference>
<dbReference type="GO" id="GO:0003700">
    <property type="term" value="F:DNA-binding transcription factor activity"/>
    <property type="evidence" value="ECO:0000314"/>
    <property type="project" value="ARUK-UCL"/>
</dbReference>
<dbReference type="GO" id="GO:0000981">
    <property type="term" value="F:DNA-binding transcription factor activity, RNA polymerase II-specific"/>
    <property type="evidence" value="ECO:0000314"/>
    <property type="project" value="BHF-UCL"/>
</dbReference>
<dbReference type="GO" id="GO:0140297">
    <property type="term" value="F:DNA-binding transcription factor binding"/>
    <property type="evidence" value="ECO:0000353"/>
    <property type="project" value="ARUK-UCL"/>
</dbReference>
<dbReference type="GO" id="GO:0001227">
    <property type="term" value="F:DNA-binding transcription repressor activity, RNA polymerase II-specific"/>
    <property type="evidence" value="ECO:0000314"/>
    <property type="project" value="NTNU_SB"/>
</dbReference>
<dbReference type="GO" id="GO:0042826">
    <property type="term" value="F:histone deacetylase binding"/>
    <property type="evidence" value="ECO:0000353"/>
    <property type="project" value="ARUK-UCL"/>
</dbReference>
<dbReference type="GO" id="GO:0051525">
    <property type="term" value="F:NFAT protein binding"/>
    <property type="evidence" value="ECO:0000353"/>
    <property type="project" value="BHF-UCL"/>
</dbReference>
<dbReference type="GO" id="GO:0140311">
    <property type="term" value="F:protein sequestering activity"/>
    <property type="evidence" value="ECO:0000315"/>
    <property type="project" value="ARUK-UCL"/>
</dbReference>
<dbReference type="GO" id="GO:0003723">
    <property type="term" value="F:RNA binding"/>
    <property type="evidence" value="ECO:0007669"/>
    <property type="project" value="UniProtKB-KW"/>
</dbReference>
<dbReference type="GO" id="GO:0000978">
    <property type="term" value="F:RNA polymerase II cis-regulatory region sequence-specific DNA binding"/>
    <property type="evidence" value="ECO:0000314"/>
    <property type="project" value="BHF-UCL"/>
</dbReference>
<dbReference type="GO" id="GO:0061629">
    <property type="term" value="F:RNA polymerase II-specific DNA-binding transcription factor binding"/>
    <property type="evidence" value="ECO:0000353"/>
    <property type="project" value="BHF-UCL"/>
</dbReference>
<dbReference type="GO" id="GO:0043565">
    <property type="term" value="F:sequence-specific DNA binding"/>
    <property type="evidence" value="ECO:0000314"/>
    <property type="project" value="MGI"/>
</dbReference>
<dbReference type="GO" id="GO:0097677">
    <property type="term" value="F:STAT family protein binding"/>
    <property type="evidence" value="ECO:0007669"/>
    <property type="project" value="Ensembl"/>
</dbReference>
<dbReference type="GO" id="GO:0060033">
    <property type="term" value="P:anatomical structure regression"/>
    <property type="evidence" value="ECO:0000315"/>
    <property type="project" value="MGI"/>
</dbReference>
<dbReference type="GO" id="GO:1902262">
    <property type="term" value="P:apoptotic process involved in blood vessel morphogenesis"/>
    <property type="evidence" value="ECO:0000315"/>
    <property type="project" value="MGI"/>
</dbReference>
<dbReference type="GO" id="GO:0071361">
    <property type="term" value="P:cellular response to ethanol"/>
    <property type="evidence" value="ECO:0007669"/>
    <property type="project" value="Ensembl"/>
</dbReference>
<dbReference type="GO" id="GO:0002357">
    <property type="term" value="P:defense response to tumor cell"/>
    <property type="evidence" value="ECO:0007669"/>
    <property type="project" value="Ensembl"/>
</dbReference>
<dbReference type="GO" id="GO:0098508">
    <property type="term" value="P:endothelial to hematopoietic transition"/>
    <property type="evidence" value="ECO:0000270"/>
    <property type="project" value="ARUK-UCL"/>
</dbReference>
<dbReference type="GO" id="GO:0030218">
    <property type="term" value="P:erythrocyte differentiation"/>
    <property type="evidence" value="ECO:0000315"/>
    <property type="project" value="MGI"/>
</dbReference>
<dbReference type="GO" id="GO:0002316">
    <property type="term" value="P:follicular B cell differentiation"/>
    <property type="evidence" value="ECO:0000316"/>
    <property type="project" value="ARUK-UCL"/>
</dbReference>
<dbReference type="GO" id="GO:0002314">
    <property type="term" value="P:germinal center B cell differentiation"/>
    <property type="evidence" value="ECO:0000316"/>
    <property type="project" value="ARUK-UCL"/>
</dbReference>
<dbReference type="GO" id="GO:0030851">
    <property type="term" value="P:granulocyte differentiation"/>
    <property type="evidence" value="ECO:0000314"/>
    <property type="project" value="MGI"/>
</dbReference>
<dbReference type="GO" id="GO:0002327">
    <property type="term" value="P:immature B cell differentiation"/>
    <property type="evidence" value="ECO:0000316"/>
    <property type="project" value="ARUK-UCL"/>
</dbReference>
<dbReference type="GO" id="GO:0070102">
    <property type="term" value="P:interleukin-6-mediated signaling pathway"/>
    <property type="evidence" value="ECO:0007669"/>
    <property type="project" value="Ensembl"/>
</dbReference>
<dbReference type="GO" id="GO:0031663">
    <property type="term" value="P:lipopolysaccharide-mediated signaling pathway"/>
    <property type="evidence" value="ECO:0000315"/>
    <property type="project" value="ARUK-UCL"/>
</dbReference>
<dbReference type="GO" id="GO:0030098">
    <property type="term" value="P:lymphocyte differentiation"/>
    <property type="evidence" value="ECO:0000314"/>
    <property type="project" value="MGI"/>
</dbReference>
<dbReference type="GO" id="GO:0002320">
    <property type="term" value="P:lymphoid progenitor cell differentiation"/>
    <property type="evidence" value="ECO:0000315"/>
    <property type="project" value="MGI"/>
</dbReference>
<dbReference type="GO" id="GO:0030225">
    <property type="term" value="P:macrophage differentiation"/>
    <property type="evidence" value="ECO:0000314"/>
    <property type="project" value="MGI"/>
</dbReference>
<dbReference type="GO" id="GO:0043011">
    <property type="term" value="P:myeloid dendritic cell differentiation"/>
    <property type="evidence" value="ECO:0000315"/>
    <property type="project" value="MGI"/>
</dbReference>
<dbReference type="GO" id="GO:0002573">
    <property type="term" value="P:myeloid leukocyte differentiation"/>
    <property type="evidence" value="ECO:0000315"/>
    <property type="project" value="MGI"/>
</dbReference>
<dbReference type="GO" id="GO:1904178">
    <property type="term" value="P:negative regulation of adipose tissue development"/>
    <property type="evidence" value="ECO:0000315"/>
    <property type="project" value="ARUK-UCL"/>
</dbReference>
<dbReference type="GO" id="GO:0043124">
    <property type="term" value="P:negative regulation of canonical NF-kappaB signal transduction"/>
    <property type="evidence" value="ECO:0007669"/>
    <property type="project" value="Ensembl"/>
</dbReference>
<dbReference type="GO" id="GO:0045892">
    <property type="term" value="P:negative regulation of DNA-templated transcription"/>
    <property type="evidence" value="ECO:0000315"/>
    <property type="project" value="ARUK-UCL"/>
</dbReference>
<dbReference type="GO" id="GO:0010629">
    <property type="term" value="P:negative regulation of gene expression"/>
    <property type="evidence" value="ECO:0000315"/>
    <property type="project" value="ARUK-UCL"/>
</dbReference>
<dbReference type="GO" id="GO:0045347">
    <property type="term" value="P:negative regulation of MHC class II biosynthetic process"/>
    <property type="evidence" value="ECO:0000314"/>
    <property type="project" value="BHF-UCL"/>
</dbReference>
<dbReference type="GO" id="GO:0043314">
    <property type="term" value="P:negative regulation of neutrophil degranulation"/>
    <property type="evidence" value="ECO:0000315"/>
    <property type="project" value="ARUK-UCL"/>
</dbReference>
<dbReference type="GO" id="GO:1901223">
    <property type="term" value="P:negative regulation of non-canonical NF-kappaB signal transduction"/>
    <property type="evidence" value="ECO:0007669"/>
    <property type="project" value="Ensembl"/>
</dbReference>
<dbReference type="GO" id="GO:0120186">
    <property type="term" value="P:negative regulation of protein localization to chromatin"/>
    <property type="evidence" value="ECO:0000315"/>
    <property type="project" value="ARUK-UCL"/>
</dbReference>
<dbReference type="GO" id="GO:0000122">
    <property type="term" value="P:negative regulation of transcription by RNA polymerase II"/>
    <property type="evidence" value="ECO:0000314"/>
    <property type="project" value="NTNU_SB"/>
</dbReference>
<dbReference type="GO" id="GO:0090402">
    <property type="term" value="P:oncogene-induced cell senescence"/>
    <property type="evidence" value="ECO:0000314"/>
    <property type="project" value="ARUK-UCL"/>
</dbReference>
<dbReference type="GO" id="GO:0030316">
    <property type="term" value="P:osteoclast differentiation"/>
    <property type="evidence" value="ECO:0007669"/>
    <property type="project" value="Ensembl"/>
</dbReference>
<dbReference type="GO" id="GO:1904238">
    <property type="term" value="P:pericyte cell differentiation"/>
    <property type="evidence" value="ECO:0000315"/>
    <property type="project" value="ARUK-UCL"/>
</dbReference>
<dbReference type="GO" id="GO:1905036">
    <property type="term" value="P:positive regulation of antifungal innate immune response"/>
    <property type="evidence" value="ECO:0000315"/>
    <property type="project" value="ARUK-UCL"/>
</dbReference>
<dbReference type="GO" id="GO:0045579">
    <property type="term" value="P:positive regulation of B cell differentiation"/>
    <property type="evidence" value="ECO:0000250"/>
    <property type="project" value="UniProtKB"/>
</dbReference>
<dbReference type="GO" id="GO:0045893">
    <property type="term" value="P:positive regulation of DNA-templated transcription"/>
    <property type="evidence" value="ECO:0000314"/>
    <property type="project" value="MGI"/>
</dbReference>
<dbReference type="GO" id="GO:0010628">
    <property type="term" value="P:positive regulation of gene expression"/>
    <property type="evidence" value="ECO:0000315"/>
    <property type="project" value="ARUK-UCL"/>
</dbReference>
<dbReference type="GO" id="GO:1904151">
    <property type="term" value="P:positive regulation of microglial cell mediated cytotoxicity"/>
    <property type="evidence" value="ECO:0000315"/>
    <property type="project" value="ARUK-UCL"/>
</dbReference>
<dbReference type="GO" id="GO:1902895">
    <property type="term" value="P:positive regulation of miRNA transcription"/>
    <property type="evidence" value="ECO:0000314"/>
    <property type="project" value="BHF-UCL"/>
</dbReference>
<dbReference type="GO" id="GO:2000529">
    <property type="term" value="P:positive regulation of myeloid dendritic cell chemotaxis"/>
    <property type="evidence" value="ECO:0000315"/>
    <property type="project" value="ARUK-UCL"/>
</dbReference>
<dbReference type="GO" id="GO:1900745">
    <property type="term" value="P:positive regulation of p38MAPK cascade"/>
    <property type="evidence" value="ECO:0000314"/>
    <property type="project" value="ARUK-UCL"/>
</dbReference>
<dbReference type="GO" id="GO:0045944">
    <property type="term" value="P:positive regulation of transcription by RNA polymerase II"/>
    <property type="evidence" value="ECO:0000314"/>
    <property type="project" value="BHF-UCL"/>
</dbReference>
<dbReference type="GO" id="GO:0002572">
    <property type="term" value="P:pro-T cell differentiation"/>
    <property type="evidence" value="ECO:0000315"/>
    <property type="project" value="ARUK-UCL"/>
</dbReference>
<dbReference type="GO" id="GO:0006355">
    <property type="term" value="P:regulation of DNA-templated transcription"/>
    <property type="evidence" value="ECO:0000314"/>
    <property type="project" value="MGI"/>
</dbReference>
<dbReference type="GO" id="GO:0045646">
    <property type="term" value="P:regulation of erythrocyte differentiation"/>
    <property type="evidence" value="ECO:0007669"/>
    <property type="project" value="Ensembl"/>
</dbReference>
<dbReference type="GO" id="GO:1905453">
    <property type="term" value="P:regulation of myeloid progenitor cell differentiation"/>
    <property type="evidence" value="ECO:0000315"/>
    <property type="project" value="ARUK-UCL"/>
</dbReference>
<dbReference type="GO" id="GO:0006357">
    <property type="term" value="P:regulation of transcription by RNA polymerase II"/>
    <property type="evidence" value="ECO:0000314"/>
    <property type="project" value="MGI"/>
</dbReference>
<dbReference type="GO" id="GO:0035019">
    <property type="term" value="P:somatic stem cell population maintenance"/>
    <property type="evidence" value="ECO:0000314"/>
    <property type="project" value="MGI"/>
</dbReference>
<dbReference type="GO" id="GO:0036462">
    <property type="term" value="P:TRAIL-activated apoptotic signaling pathway"/>
    <property type="evidence" value="ECO:0007669"/>
    <property type="project" value="Ensembl"/>
</dbReference>
<dbReference type="GO" id="GO:0045815">
    <property type="term" value="P:transcription initiation-coupled chromatin remodeling"/>
    <property type="evidence" value="ECO:0000314"/>
    <property type="project" value="ARUK-UCL"/>
</dbReference>
<dbReference type="GO" id="GO:0007179">
    <property type="term" value="P:transforming growth factor beta receptor signaling pathway"/>
    <property type="evidence" value="ECO:0000315"/>
    <property type="project" value="ARUK-UCL"/>
</dbReference>
<dbReference type="GO" id="GO:0001944">
    <property type="term" value="P:vasculature development"/>
    <property type="evidence" value="ECO:0000315"/>
    <property type="project" value="MGI"/>
</dbReference>
<dbReference type="FunFam" id="1.10.10.10:FF:000250">
    <property type="entry name" value="transcription factor Spi-B isoform X1"/>
    <property type="match status" value="1"/>
</dbReference>
<dbReference type="Gene3D" id="1.10.10.10">
    <property type="entry name" value="Winged helix-like DNA-binding domain superfamily/Winged helix DNA-binding domain"/>
    <property type="match status" value="1"/>
</dbReference>
<dbReference type="InterPro" id="IPR000418">
    <property type="entry name" value="Ets_dom"/>
</dbReference>
<dbReference type="InterPro" id="IPR046328">
    <property type="entry name" value="ETS_fam"/>
</dbReference>
<dbReference type="InterPro" id="IPR036388">
    <property type="entry name" value="WH-like_DNA-bd_sf"/>
</dbReference>
<dbReference type="InterPro" id="IPR036390">
    <property type="entry name" value="WH_DNA-bd_sf"/>
</dbReference>
<dbReference type="PANTHER" id="PTHR11849">
    <property type="entry name" value="ETS"/>
    <property type="match status" value="1"/>
</dbReference>
<dbReference type="PANTHER" id="PTHR11849:SF16">
    <property type="entry name" value="TRANSCRIPTION FACTOR PU.1"/>
    <property type="match status" value="1"/>
</dbReference>
<dbReference type="Pfam" id="PF00178">
    <property type="entry name" value="Ets"/>
    <property type="match status" value="1"/>
</dbReference>
<dbReference type="PRINTS" id="PR00454">
    <property type="entry name" value="ETSDOMAIN"/>
</dbReference>
<dbReference type="SMART" id="SM00413">
    <property type="entry name" value="ETS"/>
    <property type="match status" value="1"/>
</dbReference>
<dbReference type="SUPFAM" id="SSF46785">
    <property type="entry name" value="Winged helix' DNA-binding domain"/>
    <property type="match status" value="1"/>
</dbReference>
<dbReference type="PROSITE" id="PS00345">
    <property type="entry name" value="ETS_DOMAIN_1"/>
    <property type="match status" value="1"/>
</dbReference>
<dbReference type="PROSITE" id="PS00346">
    <property type="entry name" value="ETS_DOMAIN_2"/>
    <property type="match status" value="1"/>
</dbReference>
<dbReference type="PROSITE" id="PS50061">
    <property type="entry name" value="ETS_DOMAIN_3"/>
    <property type="match status" value="1"/>
</dbReference>
<feature type="chain" id="PRO_0000204133" description="Transcription factor PU.1">
    <location>
        <begin position="1"/>
        <end position="272"/>
    </location>
</feature>
<feature type="DNA-binding region" description="ETS" evidence="3">
    <location>
        <begin position="172"/>
        <end position="255"/>
    </location>
</feature>
<feature type="region of interest" description="Disordered" evidence="4">
    <location>
        <begin position="126"/>
        <end position="165"/>
    </location>
</feature>
<feature type="compositionally biased region" description="Low complexity" evidence="4">
    <location>
        <begin position="155"/>
        <end position="165"/>
    </location>
</feature>
<feature type="binding site" description="forms a salt bridge with the phosphate backbone of the opposite strand downstream of the GGAA core sequence" evidence="11">
    <location>
        <position position="219"/>
    </location>
    <ligand>
        <name>DNA</name>
        <dbReference type="ChEBI" id="CHEBI:16991"/>
    </ligand>
</feature>
<feature type="binding site" description="contacts bases in the GGAA sequence in the major groove" evidence="11 16">
    <location>
        <position position="232"/>
    </location>
    <ligand>
        <name>DNA</name>
        <dbReference type="ChEBI" id="CHEBI:16991"/>
    </ligand>
</feature>
<feature type="binding site" description="contacts bases in the GGAA sequence in the major groove" evidence="11 16">
    <location>
        <position position="235"/>
    </location>
    <ligand>
        <name>DNA</name>
        <dbReference type="ChEBI" id="CHEBI:16991"/>
    </ligand>
</feature>
<feature type="binding site" description="contacts the phosphate backbone of the GGAA sequence in the minor groove upstream" evidence="11">
    <location>
        <position position="245"/>
    </location>
    <ligand>
        <name>DNA</name>
        <dbReference type="ChEBI" id="CHEBI:16991"/>
    </ligand>
</feature>
<feature type="modified residue" description="Phosphoserine" evidence="1">
    <location>
        <position position="142"/>
    </location>
</feature>
<feature type="modified residue" description="Phosphoserine" evidence="17">
    <location>
        <position position="148"/>
    </location>
</feature>
<feature type="helix" evidence="19">
    <location>
        <begin position="174"/>
        <end position="184"/>
    </location>
</feature>
<feature type="turn" evidence="19">
    <location>
        <begin position="185"/>
        <end position="190"/>
    </location>
</feature>
<feature type="strand" evidence="19">
    <location>
        <begin position="191"/>
        <end position="195"/>
    </location>
</feature>
<feature type="helix" evidence="19">
    <location>
        <begin position="196"/>
        <end position="198"/>
    </location>
</feature>
<feature type="strand" evidence="19">
    <location>
        <begin position="200"/>
        <end position="203"/>
    </location>
</feature>
<feature type="turn" evidence="19">
    <location>
        <begin position="205"/>
        <end position="207"/>
    </location>
</feature>
<feature type="helix" evidence="19">
    <location>
        <begin position="208"/>
        <end position="219"/>
    </location>
</feature>
<feature type="strand" evidence="18">
    <location>
        <begin position="221"/>
        <end position="223"/>
    </location>
</feature>
<feature type="helix" evidence="19">
    <location>
        <begin position="227"/>
        <end position="240"/>
    </location>
</feature>
<feature type="strand" evidence="19">
    <location>
        <begin position="242"/>
        <end position="244"/>
    </location>
</feature>
<feature type="strand" evidence="19">
    <location>
        <begin position="248"/>
        <end position="254"/>
    </location>
</feature>
<feature type="helix" evidence="19">
    <location>
        <begin position="256"/>
        <end position="260"/>
    </location>
</feature>
<reference key="1">
    <citation type="journal article" date="1989" name="Oncogene">
        <title>The putative oncogene Spi-1: murine chromosomal localization and transcriptional activation in murine acute erythroleukemias.</title>
        <authorList>
            <person name="Moreau-Gachelin F."/>
            <person name="Ray D."/>
            <person name="Mattei M.-G."/>
            <person name="Tambourin P."/>
            <person name="Tavitian A."/>
        </authorList>
    </citation>
    <scope>NUCLEOTIDE SEQUENCE [MRNA]</scope>
    <scope>INVOLVEMENT IN ERYTHROLEUKEMIA</scope>
    <source>
        <strain>ICFW</strain>
    </source>
</reference>
<reference key="2">
    <citation type="journal article" date="1990" name="Oncogene">
        <authorList>
            <person name="Moreau-Gachelin F."/>
            <person name="Ray D."/>
            <person name="Mattei M.-G."/>
            <person name="Tambourin P."/>
            <person name="Tavitian A."/>
        </authorList>
    </citation>
    <scope>ERRATUM OF PUBMED:2594367</scope>
    <scope>SEQUENCE REVISION</scope>
</reference>
<reference key="3">
    <citation type="journal article" date="1990" name="Cell">
        <title>The macrophage and B cell-specific transcription factor PU.1 is related to the ets oncogene.</title>
        <authorList>
            <person name="Klemsz M.J."/>
            <person name="McKercher S.R."/>
            <person name="Celada A."/>
            <person name="van Beveren C."/>
            <person name="Maki R.A."/>
        </authorList>
    </citation>
    <scope>NUCLEOTIDE SEQUENCE [MRNA]</scope>
    <scope>FUNCTION</scope>
    <scope>TISSUE SPECIFICITY</scope>
</reference>
<reference key="4">
    <citation type="journal article" date="1991" name="J. Virol.">
        <title>The Sfpi-1 proviral integration site of Friend erythroleukemia encodes the ets-related transcription factor Pu.1.</title>
        <authorList>
            <person name="Paul R."/>
            <person name="Schuetze S."/>
            <person name="Kozak S.L."/>
            <person name="Kozak C.A."/>
            <person name="Kabat D."/>
        </authorList>
    </citation>
    <scope>NUCLEOTIDE SEQUENCE [MRNA]</scope>
    <scope>TISSUE SPECIFICITY</scope>
</reference>
<reference key="5">
    <citation type="journal article" date="2004" name="Genome Res.">
        <title>The status, quality, and expansion of the NIH full-length cDNA project: the Mammalian Gene Collection (MGC).</title>
        <authorList>
            <consortium name="The MGC Project Team"/>
        </authorList>
    </citation>
    <scope>NUCLEOTIDE SEQUENCE [LARGE SCALE MRNA]</scope>
    <source>
        <strain>FVB/N</strain>
        <tissue>Mammary tumor</tissue>
    </source>
</reference>
<reference key="6">
    <citation type="journal article" date="1995" name="J. Immunol.">
        <title>Multiple proteins physically interact with PU.1. Transcriptional synergy with NF-IL6 beta (C/EBP delta, CRP3).</title>
        <authorList>
            <person name="Nagulapalli S."/>
            <person name="Pongubala J.M."/>
            <person name="Atchison M.L."/>
        </authorList>
    </citation>
    <scope>INTERACTION WITH CEBPD</scope>
</reference>
<reference key="7">
    <citation type="journal article" date="1996" name="J. Biol. Chem.">
        <title>The transcription factor Spi-1/PU.1 binds RNA and interferes with the RNA-binding protein p54nrb.</title>
        <authorList>
            <person name="Hallier M."/>
            <person name="Tavitian A."/>
            <person name="Moreau-Gachelin F."/>
        </authorList>
    </citation>
    <scope>RNA-BINDING</scope>
    <scope>FUNCTION</scope>
    <scope>INTERACTION WITH NONO</scope>
</reference>
<reference key="8">
    <citation type="journal article" date="2007" name="J. Biol. Chem.">
        <title>The transcriptional repressor GFI-1 antagonizes PU.1 activity through protein-protein interaction.</title>
        <authorList>
            <person name="Dahl R."/>
            <person name="Iyer S.R."/>
            <person name="Owens K.S."/>
            <person name="Cuylear D.D."/>
            <person name="Simon M.C."/>
        </authorList>
    </citation>
    <scope>INTERACTION WITH GFI1</scope>
</reference>
<reference key="9">
    <citation type="journal article" date="2009" name="Immunity">
        <title>The phagosomal proteome in interferon-gamma-activated macrophages.</title>
        <authorList>
            <person name="Trost M."/>
            <person name="English L."/>
            <person name="Lemieux S."/>
            <person name="Courcelles M."/>
            <person name="Desjardins M."/>
            <person name="Thibault P."/>
        </authorList>
    </citation>
    <scope>PHOSPHORYLATION [LARGE SCALE ANALYSIS] AT SER-148</scope>
    <scope>IDENTIFICATION BY MASS SPECTROMETRY [LARGE SCALE ANALYSIS]</scope>
</reference>
<reference key="10">
    <citation type="journal article" date="1994" name="Science">
        <title>Requirement of transcription factor PU.1 in the development of multiple hematopoietic lineages.</title>
        <authorList>
            <person name="Scott E.W."/>
            <person name="Simon M.C."/>
            <person name="Anastasi J."/>
            <person name="Singh H."/>
        </authorList>
    </citation>
    <scope>FUNCTION</scope>
    <scope>DISRUPTION PHENOTYPE</scope>
</reference>
<reference key="11">
    <citation type="journal article" date="1996" name="Nature">
        <title>A new pattern for helix-turn-helix recognition revealed by the PU.1 ETS-domain-DNA complex.</title>
        <authorList>
            <person name="Kodandapani R."/>
            <person name="Pio F."/>
            <person name="Ni C.-Z."/>
            <person name="Piccialli G."/>
            <person name="Klemsz M."/>
            <person name="McKercher S."/>
            <person name="Maki R.A."/>
            <person name="Ely K.R."/>
        </authorList>
    </citation>
    <scope>X-RAY CRYSTALLOGRAPHY (2.3 ANGSTROMS) OF 171-259 IN COMPLEX WITH DNA</scope>
</reference>
<sequence length="272" mass="31349">MLQACKMEGFSLTAPPSDDLVTYDSELYQRPMHDYYSFVGSDGESHSDHYWDFSAHHVHNNEFENFPENHFTELQSVQPPQLQQLYRHMELEQMHVLDTPMVPPHTGLSHQVSYMPRMCFPYQTLSPAHQQSSDEEEGERQSPPLEVSDGEADGLEPGPGLLHGETGSKKKIRLYQFLLDLLRSGDMKDSIWWVDKDKGTFQFSSKHKEALAHRWGIQKGNRKKMTYQKMARALRNYGKTGEVKKVKKKLTYQFSGEVLGRGGLAERRLPPH</sequence>
<evidence type="ECO:0000250" key="1">
    <source>
        <dbReference type="UniProtKB" id="P17947"/>
    </source>
</evidence>
<evidence type="ECO:0000250" key="2">
    <source>
        <dbReference type="UniProtKB" id="Q6BDS1"/>
    </source>
</evidence>
<evidence type="ECO:0000255" key="3">
    <source>
        <dbReference type="PROSITE-ProRule" id="PRU00237"/>
    </source>
</evidence>
<evidence type="ECO:0000256" key="4">
    <source>
        <dbReference type="SAM" id="MobiDB-lite"/>
    </source>
</evidence>
<evidence type="ECO:0000269" key="5">
    <source>
    </source>
</evidence>
<evidence type="ECO:0000269" key="6">
    <source>
    </source>
</evidence>
<evidence type="ECO:0000269" key="7">
    <source>
    </source>
</evidence>
<evidence type="ECO:0000269" key="8">
    <source>
    </source>
</evidence>
<evidence type="ECO:0000269" key="9">
    <source>
    </source>
</evidence>
<evidence type="ECO:0000269" key="10">
    <source>
    </source>
</evidence>
<evidence type="ECO:0000269" key="11">
    <source>
    </source>
</evidence>
<evidence type="ECO:0000269" key="12">
    <source>
    </source>
</evidence>
<evidence type="ECO:0000303" key="13">
    <source>
    </source>
</evidence>
<evidence type="ECO:0000303" key="14">
    <source>
    </source>
</evidence>
<evidence type="ECO:0000305" key="15"/>
<evidence type="ECO:0007744" key="16">
    <source>
        <dbReference type="PDB" id="1PUE"/>
    </source>
</evidence>
<evidence type="ECO:0007744" key="17">
    <source>
    </source>
</evidence>
<evidence type="ECO:0007829" key="18">
    <source>
        <dbReference type="PDB" id="5W3G"/>
    </source>
</evidence>
<evidence type="ECO:0007829" key="19">
    <source>
        <dbReference type="PDB" id="8SMH"/>
    </source>
</evidence>
<comment type="function">
    <text evidence="1 2 7 10 12">Pioneer transcription factor, which controls hematopoietic cell fate by decompacting stem cell heterochromatin and allowing other transcription factors to enter otherwise inaccessible genomic sites (PubMed:8079170). Once in open chromatin, can directly control gene expression by binding genetic regulatory elements and can also more broadly influence transcription by recruiting transcription factors, such as interferon regulatory factors (IRFs), to otherwise inaccessible genomic regions (By similarity). Transcriptionally activates genes important for myeloid and lymphoid lineages, such as CSF1R (By similarity). Transcriptional activation from certain promoters, possibly containing low affinity binding sites, is achieved cooperatively with other transcription factors. FCER1A transactivation is achieved in cooperation with GATA1 (By similarity). May be particularly important for the pro- to pre-B cell transition (PubMed:8079170). Binds (via the ETS domain) onto the purine-rich DNA core sequence 5'-GAGGAA-3', also known as the PU-box (PubMed:2180582). In vitro can bind RNA and interfere with pre-mRNA splicing (PubMed:8626664).</text>
</comment>
<comment type="activity regulation">
    <text evidence="5">Transcriptional activity at macrophage-specific genes is inhibited by interaction with GFI1, which results in inhibition of SPI1-induced macrophage differentiation of myeloid progenitor cells, but not that of the granulocyte lineage.</text>
</comment>
<comment type="subunit">
    <text evidence="1 5 9 12">Binds DNA as a monomer. Can form homomers (By similarity). Directly interacts with CEBPD/NF-IL6-beta; this interaction does not affect DNA-binding properties of each partner (PubMed:7594592). Interacts with NONO/p54(nrb) (PubMed:8626664). Interacts with RUNX1/AML1 (By similarity). Interacts with GFI1; the interaction represses SPI1 transcriptional activity, hence blocks SPI1-induced macrophage differentiation of myeloid progenitor cells (PubMed:17197705). Interacts with CEBPE (By similarity). Interacts with IRF4/Pip and IRF8 (By similarity). Interacts with JUN (By similarity). Interacts with RB1 (By similarity). Interacts with TBP (By similarity).</text>
</comment>
<comment type="interaction">
    <interactant intactId="EBI-607588">
        <id>P17433</id>
    </interactant>
    <interactant intactId="EBI-3954754">
        <id>P70338</id>
        <label>Gfi1</label>
    </interactant>
    <organismsDiffer>false</organismsDiffer>
    <experiments>2</experiments>
</comment>
<comment type="interaction">
    <interactant intactId="EBI-607588">
        <id>P17433</id>
    </interactant>
    <interactant intactId="EBI-607499">
        <id>Q99K48</id>
        <label>Nono</label>
    </interactant>
    <organismsDiffer>false</organismsDiffer>
    <experiments>3</experiments>
</comment>
<comment type="interaction">
    <interactant intactId="EBI-607588">
        <id>P17433</id>
    </interactant>
    <interactant intactId="EBI-949368">
        <id>Q99684</id>
        <label>GFI1</label>
    </interactant>
    <organismsDiffer>true</organismsDiffer>
    <experiments>2</experiments>
</comment>
<comment type="subcellular location">
    <subcellularLocation>
        <location evidence="1">Nucleus</location>
    </subcellularLocation>
</comment>
<comment type="tissue specificity">
    <text evidence="6 7">Expressed in spleen, thymus and bone-marrow macrophages.</text>
</comment>
<comment type="disease">
    <text evidence="6 8">May be involved in murine acute Friend erythroleukemia. It is a target region for SFFV proviral insertion.</text>
</comment>
<comment type="disruption phenotype">
    <text evidence="10">Knockout embryos die at a late gestational stage, with no viable embryo after day 18 of gestation. Mutant embryos produce normal numbers of megakaryocytes and erythroid progenitors, but some show an impairment of erythroblast maturation. They exhibit a multilineage defect in the generation of progenitors for B and T lymphocytes, monocytes and granulocytes.</text>
</comment>
<comment type="similarity">
    <text evidence="15">Belongs to the ETS family.</text>
</comment>
<comment type="sequence caution" evidence="15">
    <conflict type="erroneous initiation">
        <sequence resource="EMBL-CDS" id="AAB59699"/>
    </conflict>
    <text>Truncated N-terminus.</text>
</comment>
<comment type="sequence caution" evidence="15">
    <conflict type="erroneous initiation">
        <sequence resource="EMBL-CDS" id="CAA35502"/>
    </conflict>
    <text>Truncated N-terminus.</text>
</comment>
<protein>
    <recommendedName>
        <fullName evidence="14">Transcription factor PU.1</fullName>
    </recommendedName>
    <alternativeName>
        <fullName>31 kDa-transforming protein</fullName>
    </alternativeName>
    <alternativeName>
        <fullName>SFFV proviral integration 1 protein</fullName>
    </alternativeName>
</protein>